<protein>
    <recommendedName>
        <fullName evidence="1">Elongation factor G</fullName>
        <shortName evidence="1">EF-G</shortName>
    </recommendedName>
</protein>
<accession>Q8KTB9</accession>
<reference key="1">
    <citation type="journal article" date="2002" name="Mol. Biol. Evol.">
        <title>Proliferation and deterioration of Rickettsia palindromic elements.</title>
        <authorList>
            <person name="Amiri H."/>
            <person name="Alsmark C.M."/>
            <person name="Andersson S.G.E."/>
        </authorList>
    </citation>
    <scope>NUCLEOTIDE SEQUENCE [GENOMIC DNA]</scope>
</reference>
<comment type="function">
    <text evidence="1">Catalyzes the GTP-dependent ribosomal translocation step during translation elongation. During this step, the ribosome changes from the pre-translocational (PRE) to the post-translocational (POST) state as the newly formed A-site-bound peptidyl-tRNA and P-site-bound deacylated tRNA move to the P and E sites, respectively. Catalyzes the coordinated movement of the two tRNA molecules, the mRNA and conformational changes in the ribosome.</text>
</comment>
<comment type="subcellular location">
    <subcellularLocation>
        <location evidence="1">Cytoplasm</location>
    </subcellularLocation>
</comment>
<comment type="similarity">
    <text evidence="1">Belongs to the TRAFAC class translation factor GTPase superfamily. Classic translation factor GTPase family. EF-G/EF-2 subfamily.</text>
</comment>
<evidence type="ECO:0000255" key="1">
    <source>
        <dbReference type="HAMAP-Rule" id="MF_00054"/>
    </source>
</evidence>
<organism>
    <name type="scientific">Rickettsia parkeri</name>
    <dbReference type="NCBI Taxonomy" id="35792"/>
    <lineage>
        <taxon>Bacteria</taxon>
        <taxon>Pseudomonadati</taxon>
        <taxon>Pseudomonadota</taxon>
        <taxon>Alphaproteobacteria</taxon>
        <taxon>Rickettsiales</taxon>
        <taxon>Rickettsiaceae</taxon>
        <taxon>Rickettsieae</taxon>
        <taxon>Rickettsia</taxon>
        <taxon>spotted fever group</taxon>
    </lineage>
</organism>
<name>EFG_RICPA</name>
<feature type="chain" id="PRO_0000091200" description="Elongation factor G">
    <location>
        <begin position="1"/>
        <end position="699"/>
    </location>
</feature>
<feature type="domain" description="tr-type G">
    <location>
        <begin position="8"/>
        <end position="283"/>
    </location>
</feature>
<feature type="binding site" evidence="1">
    <location>
        <begin position="17"/>
        <end position="24"/>
    </location>
    <ligand>
        <name>GTP</name>
        <dbReference type="ChEBI" id="CHEBI:37565"/>
    </ligand>
</feature>
<feature type="binding site" evidence="1">
    <location>
        <begin position="81"/>
        <end position="85"/>
    </location>
    <ligand>
        <name>GTP</name>
        <dbReference type="ChEBI" id="CHEBI:37565"/>
    </ligand>
</feature>
<feature type="binding site" evidence="1">
    <location>
        <begin position="135"/>
        <end position="138"/>
    </location>
    <ligand>
        <name>GTP</name>
        <dbReference type="ChEBI" id="CHEBI:37565"/>
    </ligand>
</feature>
<dbReference type="EMBL" id="AF502171">
    <property type="protein sequence ID" value="AAM90915.1"/>
    <property type="molecule type" value="Genomic_DNA"/>
</dbReference>
<dbReference type="SMR" id="Q8KTB9"/>
<dbReference type="GO" id="GO:0005737">
    <property type="term" value="C:cytoplasm"/>
    <property type="evidence" value="ECO:0007669"/>
    <property type="project" value="UniProtKB-SubCell"/>
</dbReference>
<dbReference type="GO" id="GO:0005525">
    <property type="term" value="F:GTP binding"/>
    <property type="evidence" value="ECO:0007669"/>
    <property type="project" value="UniProtKB-UniRule"/>
</dbReference>
<dbReference type="GO" id="GO:0003924">
    <property type="term" value="F:GTPase activity"/>
    <property type="evidence" value="ECO:0007669"/>
    <property type="project" value="InterPro"/>
</dbReference>
<dbReference type="GO" id="GO:0003746">
    <property type="term" value="F:translation elongation factor activity"/>
    <property type="evidence" value="ECO:0007669"/>
    <property type="project" value="UniProtKB-UniRule"/>
</dbReference>
<dbReference type="GO" id="GO:0032790">
    <property type="term" value="P:ribosome disassembly"/>
    <property type="evidence" value="ECO:0007669"/>
    <property type="project" value="TreeGrafter"/>
</dbReference>
<dbReference type="CDD" id="cd01886">
    <property type="entry name" value="EF-G"/>
    <property type="match status" value="1"/>
</dbReference>
<dbReference type="CDD" id="cd16262">
    <property type="entry name" value="EFG_III"/>
    <property type="match status" value="1"/>
</dbReference>
<dbReference type="CDD" id="cd01434">
    <property type="entry name" value="EFG_mtEFG1_IV"/>
    <property type="match status" value="1"/>
</dbReference>
<dbReference type="CDD" id="cd03713">
    <property type="entry name" value="EFG_mtEFG_C"/>
    <property type="match status" value="1"/>
</dbReference>
<dbReference type="CDD" id="cd04088">
    <property type="entry name" value="EFG_mtEFG_II"/>
    <property type="match status" value="1"/>
</dbReference>
<dbReference type="FunFam" id="2.40.30.10:FF:000006">
    <property type="entry name" value="Elongation factor G"/>
    <property type="match status" value="1"/>
</dbReference>
<dbReference type="FunFam" id="3.30.230.10:FF:000003">
    <property type="entry name" value="Elongation factor G"/>
    <property type="match status" value="1"/>
</dbReference>
<dbReference type="FunFam" id="3.30.70.240:FF:000001">
    <property type="entry name" value="Elongation factor G"/>
    <property type="match status" value="1"/>
</dbReference>
<dbReference type="FunFam" id="3.30.70.870:FF:000001">
    <property type="entry name" value="Elongation factor G"/>
    <property type="match status" value="1"/>
</dbReference>
<dbReference type="FunFam" id="3.40.50.300:FF:000029">
    <property type="entry name" value="Elongation factor G"/>
    <property type="match status" value="1"/>
</dbReference>
<dbReference type="Gene3D" id="3.30.230.10">
    <property type="match status" value="1"/>
</dbReference>
<dbReference type="Gene3D" id="3.30.70.240">
    <property type="match status" value="1"/>
</dbReference>
<dbReference type="Gene3D" id="3.30.70.870">
    <property type="entry name" value="Elongation Factor G (Translational Gtpase), domain 3"/>
    <property type="match status" value="1"/>
</dbReference>
<dbReference type="Gene3D" id="3.40.50.300">
    <property type="entry name" value="P-loop containing nucleotide triphosphate hydrolases"/>
    <property type="match status" value="1"/>
</dbReference>
<dbReference type="Gene3D" id="2.40.30.10">
    <property type="entry name" value="Translation factors"/>
    <property type="match status" value="1"/>
</dbReference>
<dbReference type="HAMAP" id="MF_00054_B">
    <property type="entry name" value="EF_G_EF_2_B"/>
    <property type="match status" value="1"/>
</dbReference>
<dbReference type="InterPro" id="IPR053905">
    <property type="entry name" value="EF-G-like_DII"/>
</dbReference>
<dbReference type="InterPro" id="IPR041095">
    <property type="entry name" value="EFG_II"/>
</dbReference>
<dbReference type="InterPro" id="IPR009022">
    <property type="entry name" value="EFG_III"/>
</dbReference>
<dbReference type="InterPro" id="IPR035647">
    <property type="entry name" value="EFG_III/V"/>
</dbReference>
<dbReference type="InterPro" id="IPR047872">
    <property type="entry name" value="EFG_IV"/>
</dbReference>
<dbReference type="InterPro" id="IPR035649">
    <property type="entry name" value="EFG_V"/>
</dbReference>
<dbReference type="InterPro" id="IPR000640">
    <property type="entry name" value="EFG_V-like"/>
</dbReference>
<dbReference type="InterPro" id="IPR031157">
    <property type="entry name" value="G_TR_CS"/>
</dbReference>
<dbReference type="InterPro" id="IPR027417">
    <property type="entry name" value="P-loop_NTPase"/>
</dbReference>
<dbReference type="InterPro" id="IPR020568">
    <property type="entry name" value="Ribosomal_Su5_D2-typ_SF"/>
</dbReference>
<dbReference type="InterPro" id="IPR014721">
    <property type="entry name" value="Ribsml_uS5_D2-typ_fold_subgr"/>
</dbReference>
<dbReference type="InterPro" id="IPR005225">
    <property type="entry name" value="Small_GTP-bd"/>
</dbReference>
<dbReference type="InterPro" id="IPR000795">
    <property type="entry name" value="T_Tr_GTP-bd_dom"/>
</dbReference>
<dbReference type="InterPro" id="IPR009000">
    <property type="entry name" value="Transl_B-barrel_sf"/>
</dbReference>
<dbReference type="InterPro" id="IPR004540">
    <property type="entry name" value="Transl_elong_EFG/EF2"/>
</dbReference>
<dbReference type="InterPro" id="IPR005517">
    <property type="entry name" value="Transl_elong_EFG/EF2_IV"/>
</dbReference>
<dbReference type="NCBIfam" id="TIGR00484">
    <property type="entry name" value="EF-G"/>
    <property type="match status" value="1"/>
</dbReference>
<dbReference type="NCBIfam" id="NF009381">
    <property type="entry name" value="PRK12740.1-5"/>
    <property type="match status" value="1"/>
</dbReference>
<dbReference type="NCBIfam" id="TIGR00231">
    <property type="entry name" value="small_GTP"/>
    <property type="match status" value="1"/>
</dbReference>
<dbReference type="PANTHER" id="PTHR43261:SF1">
    <property type="entry name" value="RIBOSOME-RELEASING FACTOR 2, MITOCHONDRIAL"/>
    <property type="match status" value="1"/>
</dbReference>
<dbReference type="PANTHER" id="PTHR43261">
    <property type="entry name" value="TRANSLATION ELONGATION FACTOR G-RELATED"/>
    <property type="match status" value="1"/>
</dbReference>
<dbReference type="Pfam" id="PF22042">
    <property type="entry name" value="EF-G_D2"/>
    <property type="match status" value="1"/>
</dbReference>
<dbReference type="Pfam" id="PF00679">
    <property type="entry name" value="EFG_C"/>
    <property type="match status" value="1"/>
</dbReference>
<dbReference type="Pfam" id="PF14492">
    <property type="entry name" value="EFG_III"/>
    <property type="match status" value="1"/>
</dbReference>
<dbReference type="Pfam" id="PF03764">
    <property type="entry name" value="EFG_IV"/>
    <property type="match status" value="1"/>
</dbReference>
<dbReference type="Pfam" id="PF00009">
    <property type="entry name" value="GTP_EFTU"/>
    <property type="match status" value="1"/>
</dbReference>
<dbReference type="PRINTS" id="PR00315">
    <property type="entry name" value="ELONGATNFCT"/>
</dbReference>
<dbReference type="SMART" id="SM00838">
    <property type="entry name" value="EFG_C"/>
    <property type="match status" value="1"/>
</dbReference>
<dbReference type="SMART" id="SM00889">
    <property type="entry name" value="EFG_IV"/>
    <property type="match status" value="1"/>
</dbReference>
<dbReference type="SUPFAM" id="SSF54980">
    <property type="entry name" value="EF-G C-terminal domain-like"/>
    <property type="match status" value="2"/>
</dbReference>
<dbReference type="SUPFAM" id="SSF52540">
    <property type="entry name" value="P-loop containing nucleoside triphosphate hydrolases"/>
    <property type="match status" value="1"/>
</dbReference>
<dbReference type="SUPFAM" id="SSF54211">
    <property type="entry name" value="Ribosomal protein S5 domain 2-like"/>
    <property type="match status" value="1"/>
</dbReference>
<dbReference type="SUPFAM" id="SSF50447">
    <property type="entry name" value="Translation proteins"/>
    <property type="match status" value="1"/>
</dbReference>
<dbReference type="PROSITE" id="PS00301">
    <property type="entry name" value="G_TR_1"/>
    <property type="match status" value="1"/>
</dbReference>
<dbReference type="PROSITE" id="PS51722">
    <property type="entry name" value="G_TR_2"/>
    <property type="match status" value="1"/>
</dbReference>
<gene>
    <name evidence="1" type="primary">fusA</name>
</gene>
<proteinExistence type="inferred from homology"/>
<keyword id="KW-0963">Cytoplasm</keyword>
<keyword id="KW-0251">Elongation factor</keyword>
<keyword id="KW-0342">GTP-binding</keyword>
<keyword id="KW-0547">Nucleotide-binding</keyword>
<keyword id="KW-0648">Protein biosynthesis</keyword>
<sequence>MSKINKLEHIRNIGICAHIDAGKTTTTERILYYTGKSHKIGEVHEGGATMDWMEQEQERGITITSAATTCRWQDKIINIIDTPGHVDFTIEVERSLRVLDGAVAVFDGVAGVEPQSETVWRQADKYNVPRMCFVNKMDRMGADFYRCVEMLKDRLGAKPLVIQLPVGIEENFKGIIDLIKMKAVIWKDEALGAEYFEEDIPADMKDKAEEYRAKLLDMVVELDDHVMEKYLSGEEVTAEEIKRLIRKGTISAVFYPVLCGSAFKNKGVQPLLDAVVDFLPSPIDIGIVKGREVSTGEEKDFLISVTEPFAALAFKIMNDPFVGSLTFIRIYSGKITSGTTVINTVKNKREKIGRMLLMHANNREDVKEASAGDIVALAGLKDTTTGDTLSDIDQQVILERMEFPEPVIELAVEPKSTADQEKMGLALSRLAAEDPSFRVSTDYETGQTVIKGMGELHLEIIIDRMRREFKVEANIGAPQVAYRETITKVCEIDYTHKKQSGGAGQFARVKIIFEPLKEVKDLKDEDKNKIFVFESKIIGGAVPKEYIPGVEKGLNNIRETGVIAVYPMIDFKATLVDGAFHDVDSSVLAFEIAAKAAFREGMPKGNPKLLEPIMQVEVITPDEYMGDIIGDLNSRRGQIQSMDPRGNAQVVTANVPLAEMFGYVNTLRSLSQGRAQFSMIFSHYDQVPSQVADIIKAKK</sequence>